<sequence>NAAAEIFRIAAVMNGLTLVGVAIGFVLLRIEATVEE</sequence>
<name>PETM_SPIOL</name>
<keyword id="KW-0002">3D-structure</keyword>
<keyword id="KW-0150">Chloroplast</keyword>
<keyword id="KW-0903">Direct protein sequencing</keyword>
<keyword id="KW-0249">Electron transport</keyword>
<keyword id="KW-0472">Membrane</keyword>
<keyword id="KW-0602">Photosynthesis</keyword>
<keyword id="KW-0934">Plastid</keyword>
<keyword id="KW-1185">Reference proteome</keyword>
<keyword id="KW-0793">Thylakoid</keyword>
<keyword id="KW-0812">Transmembrane</keyword>
<keyword id="KW-1133">Transmembrane helix</keyword>
<keyword id="KW-0813">Transport</keyword>
<proteinExistence type="evidence at protein level"/>
<comment type="function">
    <text evidence="1">Component of the cytochrome b6-f complex, which mediates electron transfer between photosystem II (PSII) and photosystem I (PSI), cyclic electron flow around PSI, and state transitions.</text>
</comment>
<comment type="subunit">
    <text evidence="1">The 4 large subunits of the cytochrome b6-f complex are cytochrome b6, subunit IV (17 kDa polypeptide, PetD), cytochrome f and the Rieske protein, while the 4 small subunits are PetG, PetL, PetM and PetN. The complex functions as a dimer (By similarity).</text>
</comment>
<comment type="subcellular location">
    <subcellularLocation>
        <location evidence="1">Plastid</location>
        <location evidence="1">Chloroplast thylakoid membrane</location>
        <topology evidence="1">Single-pass membrane protein</topology>
    </subcellularLocation>
</comment>
<comment type="similarity">
    <text evidence="4">Belongs to the PetM family.</text>
</comment>
<feature type="chain" id="PRO_0000218019" description="Cytochrome b6-f complex subunit 7">
    <location>
        <begin position="1"/>
        <end position="36" status="greater than"/>
    </location>
</feature>
<feature type="topological domain" description="Lumenal" evidence="2">
    <location>
        <begin position="1"/>
        <end position="5"/>
    </location>
</feature>
<feature type="transmembrane region" description="Helical" evidence="2">
    <location>
        <begin position="6"/>
        <end position="28"/>
    </location>
</feature>
<feature type="topological domain" description="Stromal" evidence="2">
    <location>
        <begin position="29"/>
        <end position="36" status="greater than"/>
    </location>
</feature>
<feature type="non-terminal residue" evidence="3">
    <location>
        <position position="36"/>
    </location>
</feature>
<accession>P80883</accession>
<organism>
    <name type="scientific">Spinacia oleracea</name>
    <name type="common">Spinach</name>
    <dbReference type="NCBI Taxonomy" id="3562"/>
    <lineage>
        <taxon>Eukaryota</taxon>
        <taxon>Viridiplantae</taxon>
        <taxon>Streptophyta</taxon>
        <taxon>Embryophyta</taxon>
        <taxon>Tracheophyta</taxon>
        <taxon>Spermatophyta</taxon>
        <taxon>Magnoliopsida</taxon>
        <taxon>eudicotyledons</taxon>
        <taxon>Gunneridae</taxon>
        <taxon>Pentapetalae</taxon>
        <taxon>Caryophyllales</taxon>
        <taxon>Chenopodiaceae</taxon>
        <taxon>Chenopodioideae</taxon>
        <taxon>Anserineae</taxon>
        <taxon>Spinacia</taxon>
    </lineage>
</organism>
<evidence type="ECO:0000250" key="1"/>
<evidence type="ECO:0000255" key="2"/>
<evidence type="ECO:0000303" key="3">
    <source ref="1"/>
</evidence>
<evidence type="ECO:0000305" key="4"/>
<dbReference type="PDB" id="6RQF">
    <property type="method" value="EM"/>
    <property type="resolution" value="3.58 A"/>
    <property type="chains" value="F/N=1-36"/>
</dbReference>
<dbReference type="PDB" id="7QRM">
    <property type="method" value="EM"/>
    <property type="resolution" value="2.70 A"/>
    <property type="chains" value="F/N=1-36"/>
</dbReference>
<dbReference type="PDBsum" id="6RQF"/>
<dbReference type="PDBsum" id="7QRM"/>
<dbReference type="SMR" id="P80883"/>
<dbReference type="IntAct" id="P80883">
    <property type="interactions" value="1"/>
</dbReference>
<dbReference type="Proteomes" id="UP001155700">
    <property type="component" value="Unplaced"/>
</dbReference>
<dbReference type="GO" id="GO:0009535">
    <property type="term" value="C:chloroplast thylakoid membrane"/>
    <property type="evidence" value="ECO:0007669"/>
    <property type="project" value="UniProtKB-SubCell"/>
</dbReference>
<dbReference type="GO" id="GO:0009512">
    <property type="term" value="C:cytochrome b6f complex"/>
    <property type="evidence" value="ECO:0007669"/>
    <property type="project" value="InterPro"/>
</dbReference>
<dbReference type="GO" id="GO:0015979">
    <property type="term" value="P:photosynthesis"/>
    <property type="evidence" value="ECO:0007669"/>
    <property type="project" value="UniProtKB-KW"/>
</dbReference>
<dbReference type="HAMAP" id="MF_00396">
    <property type="entry name" value="Cytb6_f_PetM"/>
    <property type="match status" value="1"/>
</dbReference>
<dbReference type="InterPro" id="IPR053333">
    <property type="entry name" value="Cytochrome_b6-f_sub7"/>
</dbReference>
<dbReference type="InterPro" id="IPR012595">
    <property type="entry name" value="PetM_cyt_b6/f_cplx_su7"/>
</dbReference>
<dbReference type="PANTHER" id="PTHR34951">
    <property type="entry name" value="B6F COMPLEX SUBUNIT, PUTATIVE, EXPRESSED-RELATED"/>
    <property type="match status" value="1"/>
</dbReference>
<dbReference type="PANTHER" id="PTHR34951:SF1">
    <property type="entry name" value="B6F COMPLEX SUBUNIT, PUTATIVE, EXPRESSED-RELATED"/>
    <property type="match status" value="1"/>
</dbReference>
<dbReference type="Pfam" id="PF08041">
    <property type="entry name" value="PetM"/>
    <property type="match status" value="1"/>
</dbReference>
<dbReference type="SUPFAM" id="SSF103441">
    <property type="entry name" value="PetM subunit of the cytochrome b6f complex"/>
    <property type="match status" value="1"/>
</dbReference>
<gene>
    <name evidence="3" type="primary">petM</name>
</gene>
<protein>
    <recommendedName>
        <fullName>Cytochrome b6-f complex subunit 7</fullName>
    </recommendedName>
    <alternativeName>
        <fullName>Cytochrome b6-f complex subunit PetM</fullName>
    </alternativeName>
    <alternativeName>
        <fullName>Cytochrome b6-f complex subunit VII</fullName>
    </alternativeName>
</protein>
<reference evidence="4" key="1">
    <citation type="submission" date="1997-01" db="UniProtKB">
        <title>Molecular characterization of the PetM subunit of the chloroplast b6f complex from higher plants.</title>
        <authorList>
            <person name="Kuegler M."/>
            <person name="Kruft V."/>
            <person name="Schmitz U.K."/>
            <person name="Braun H.-P."/>
        </authorList>
    </citation>
    <scope>PROTEIN SEQUENCE</scope>
</reference>